<evidence type="ECO:0000250" key="1"/>
<evidence type="ECO:0000250" key="2">
    <source>
        <dbReference type="UniProtKB" id="Q05599"/>
    </source>
</evidence>
<evidence type="ECO:0000305" key="3"/>
<organism>
    <name type="scientific">Escherichia coli (strain K12)</name>
    <dbReference type="NCBI Taxonomy" id="83333"/>
    <lineage>
        <taxon>Bacteria</taxon>
        <taxon>Pseudomonadati</taxon>
        <taxon>Pseudomonadota</taxon>
        <taxon>Gammaproteobacteria</taxon>
        <taxon>Enterobacterales</taxon>
        <taxon>Enterobacteriaceae</taxon>
        <taxon>Escherichia</taxon>
    </lineage>
</organism>
<comment type="function">
    <text evidence="2">Catalyzes ATP-dependent phosphorylation of adenosylcobinamide and addition of GMP to adenosylcobinamide phosphate.</text>
</comment>
<comment type="catalytic activity">
    <reaction evidence="2">
        <text>adenosylcob(III)inamide + GTP = adenosylcob(III)inamide phosphate + GDP + H(+)</text>
        <dbReference type="Rhea" id="RHEA:15765"/>
        <dbReference type="ChEBI" id="CHEBI:2480"/>
        <dbReference type="ChEBI" id="CHEBI:15378"/>
        <dbReference type="ChEBI" id="CHEBI:37565"/>
        <dbReference type="ChEBI" id="CHEBI:58189"/>
        <dbReference type="ChEBI" id="CHEBI:58502"/>
        <dbReference type="EC" id="2.7.1.156"/>
    </reaction>
</comment>
<comment type="catalytic activity">
    <reaction evidence="2">
        <text>adenosylcob(III)inamide + ATP = adenosylcob(III)inamide phosphate + ADP + H(+)</text>
        <dbReference type="Rhea" id="RHEA:15769"/>
        <dbReference type="ChEBI" id="CHEBI:2480"/>
        <dbReference type="ChEBI" id="CHEBI:15378"/>
        <dbReference type="ChEBI" id="CHEBI:30616"/>
        <dbReference type="ChEBI" id="CHEBI:58502"/>
        <dbReference type="ChEBI" id="CHEBI:456216"/>
        <dbReference type="EC" id="2.7.1.156"/>
    </reaction>
</comment>
<comment type="catalytic activity">
    <reaction evidence="2">
        <text>adenosylcob(III)inamide phosphate + GTP + H(+) = adenosylcob(III)inamide-GDP + diphosphate</text>
        <dbReference type="Rhea" id="RHEA:22712"/>
        <dbReference type="ChEBI" id="CHEBI:15378"/>
        <dbReference type="ChEBI" id="CHEBI:33019"/>
        <dbReference type="ChEBI" id="CHEBI:37565"/>
        <dbReference type="ChEBI" id="CHEBI:58502"/>
        <dbReference type="ChEBI" id="CHEBI:60487"/>
        <dbReference type="EC" id="2.7.7.62"/>
    </reaction>
</comment>
<comment type="pathway">
    <text>Cofactor biosynthesis; adenosylcobalamin biosynthesis; adenosylcobalamin from cob(II)yrinate a,c-diamide: step 5/7.</text>
</comment>
<comment type="pathway">
    <text>Cofactor biosynthesis; adenosylcobalamin biosynthesis; adenosylcobalamin from cob(II)yrinate a,c-diamide: step 6/7.</text>
</comment>
<comment type="subunit">
    <text evidence="1">Homodimer.</text>
</comment>
<comment type="induction">
    <text>By cobinamide.</text>
</comment>
<comment type="similarity">
    <text evidence="3">Belongs to the CobU/CobP family.</text>
</comment>
<sequence length="181" mass="20164">MMILVTGGARSGKSRHAEALIGDSSQVLYIATSQILDDEMAARIEHHRQGRPEHWRTVERWQHLDELIHADINPNEVVLLECVTTMVTNLLFDYGGDKDPDEWDYQAMEQAINAEIQSLIAACQRCPAKVVLVTNEVGMGIVPESRLARHFRDIAGRVNQQLAAAANEVWLVVSGIGVKIK</sequence>
<dbReference type="EC" id="2.7.1.156" evidence="2"/>
<dbReference type="EC" id="2.7.7.62" evidence="2"/>
<dbReference type="EMBL" id="U33333">
    <property type="protein sequence ID" value="AAA78906.1"/>
    <property type="molecule type" value="Genomic_DNA"/>
</dbReference>
<dbReference type="EMBL" id="U00096">
    <property type="protein sequence ID" value="AAC75054.1"/>
    <property type="molecule type" value="Genomic_DNA"/>
</dbReference>
<dbReference type="EMBL" id="AP009048">
    <property type="protein sequence ID" value="BAA15810.1"/>
    <property type="molecule type" value="Genomic_DNA"/>
</dbReference>
<dbReference type="PIR" id="H64963">
    <property type="entry name" value="H64963"/>
</dbReference>
<dbReference type="RefSeq" id="NP_416497.1">
    <property type="nucleotide sequence ID" value="NC_000913.3"/>
</dbReference>
<dbReference type="RefSeq" id="WP_000973176.1">
    <property type="nucleotide sequence ID" value="NZ_SSUV01000031.1"/>
</dbReference>
<dbReference type="SMR" id="P0AE76"/>
<dbReference type="BioGRID" id="4262116">
    <property type="interactions" value="26"/>
</dbReference>
<dbReference type="FunCoup" id="P0AE76">
    <property type="interactions" value="339"/>
</dbReference>
<dbReference type="IntAct" id="P0AE76">
    <property type="interactions" value="4"/>
</dbReference>
<dbReference type="STRING" id="511145.b1993"/>
<dbReference type="jPOST" id="P0AE76"/>
<dbReference type="PaxDb" id="511145-b1993"/>
<dbReference type="EnsemblBacteria" id="AAC75054">
    <property type="protein sequence ID" value="AAC75054"/>
    <property type="gene ID" value="b1993"/>
</dbReference>
<dbReference type="GeneID" id="946519"/>
<dbReference type="KEGG" id="ecj:JW1971"/>
<dbReference type="KEGG" id="eco:b1993"/>
<dbReference type="KEGG" id="ecoc:C3026_11245"/>
<dbReference type="PATRIC" id="fig|511145.12.peg.2068"/>
<dbReference type="EchoBASE" id="EB3027"/>
<dbReference type="eggNOG" id="COG2087">
    <property type="taxonomic scope" value="Bacteria"/>
</dbReference>
<dbReference type="HOGENOM" id="CLU_094161_0_2_6"/>
<dbReference type="InParanoid" id="P0AE76"/>
<dbReference type="OMA" id="NELGMGI"/>
<dbReference type="OrthoDB" id="9788370at2"/>
<dbReference type="PhylomeDB" id="P0AE76"/>
<dbReference type="BioCyc" id="EcoCyc:COBU-MONOMER"/>
<dbReference type="UniPathway" id="UPA00148">
    <property type="reaction ID" value="UER00236"/>
</dbReference>
<dbReference type="UniPathway" id="UPA00148">
    <property type="reaction ID" value="UER00237"/>
</dbReference>
<dbReference type="PRO" id="PR:P0AE76"/>
<dbReference type="Proteomes" id="UP000000625">
    <property type="component" value="Chromosome"/>
</dbReference>
<dbReference type="GO" id="GO:0043752">
    <property type="term" value="F:adenosylcobinamide kinase activity"/>
    <property type="evidence" value="ECO:0007669"/>
    <property type="project" value="UniProtKB-EC"/>
</dbReference>
<dbReference type="GO" id="GO:0005524">
    <property type="term" value="F:ATP binding"/>
    <property type="evidence" value="ECO:0007669"/>
    <property type="project" value="UniProtKB-KW"/>
</dbReference>
<dbReference type="GO" id="GO:0008820">
    <property type="term" value="F:cobinamide phosphate guanylyltransferase activity"/>
    <property type="evidence" value="ECO:0000250"/>
    <property type="project" value="EcoCyc"/>
</dbReference>
<dbReference type="GO" id="GO:0005525">
    <property type="term" value="F:GTP binding"/>
    <property type="evidence" value="ECO:0007669"/>
    <property type="project" value="UniProtKB-KW"/>
</dbReference>
<dbReference type="GO" id="GO:0009236">
    <property type="term" value="P:cobalamin biosynthetic process"/>
    <property type="evidence" value="ECO:0000269"/>
    <property type="project" value="EcoCyc"/>
</dbReference>
<dbReference type="GO" id="GO:0006974">
    <property type="term" value="P:DNA damage response"/>
    <property type="evidence" value="ECO:0000270"/>
    <property type="project" value="EcoliWiki"/>
</dbReference>
<dbReference type="GO" id="GO:0006779">
    <property type="term" value="P:porphyrin-containing compound biosynthetic process"/>
    <property type="evidence" value="ECO:0007669"/>
    <property type="project" value="UniProtKB-KW"/>
</dbReference>
<dbReference type="CDD" id="cd00544">
    <property type="entry name" value="CobU"/>
    <property type="match status" value="1"/>
</dbReference>
<dbReference type="FunFam" id="3.40.50.300:FF:000632">
    <property type="entry name" value="Bifunctional adenosylcobalamin biosynthesis protein"/>
    <property type="match status" value="1"/>
</dbReference>
<dbReference type="Gene3D" id="3.40.50.300">
    <property type="entry name" value="P-loop containing nucleotide triphosphate hydrolases"/>
    <property type="match status" value="1"/>
</dbReference>
<dbReference type="InterPro" id="IPR003203">
    <property type="entry name" value="CobU/CobP"/>
</dbReference>
<dbReference type="InterPro" id="IPR027417">
    <property type="entry name" value="P-loop_NTPase"/>
</dbReference>
<dbReference type="NCBIfam" id="NF004469">
    <property type="entry name" value="PRK05800.1"/>
    <property type="match status" value="1"/>
</dbReference>
<dbReference type="PANTHER" id="PTHR34848">
    <property type="match status" value="1"/>
</dbReference>
<dbReference type="PANTHER" id="PTHR34848:SF1">
    <property type="entry name" value="BIFUNCTIONAL ADENOSYLCOBALAMIN BIOSYNTHESIS PROTEIN COBU"/>
    <property type="match status" value="1"/>
</dbReference>
<dbReference type="Pfam" id="PF02283">
    <property type="entry name" value="CobU"/>
    <property type="match status" value="1"/>
</dbReference>
<dbReference type="PIRSF" id="PIRSF006135">
    <property type="entry name" value="CobU"/>
    <property type="match status" value="1"/>
</dbReference>
<dbReference type="SUPFAM" id="SSF52540">
    <property type="entry name" value="P-loop containing nucleoside triphosphate hydrolases"/>
    <property type="match status" value="1"/>
</dbReference>
<keyword id="KW-0067">ATP-binding</keyword>
<keyword id="KW-0169">Cobalamin biosynthesis</keyword>
<keyword id="KW-0342">GTP-binding</keyword>
<keyword id="KW-0418">Kinase</keyword>
<keyword id="KW-0547">Nucleotide-binding</keyword>
<keyword id="KW-0627">Porphyrin biosynthesis</keyword>
<keyword id="KW-1185">Reference proteome</keyword>
<keyword id="KW-0808">Transferase</keyword>
<gene>
    <name type="primary">cobU</name>
    <name type="ordered locus">b1993</name>
    <name type="ordered locus">JW1971</name>
</gene>
<proteinExistence type="evidence at transcript level"/>
<protein>
    <recommendedName>
        <fullName>Bifunctional adenosylcobalamin biosynthesis protein CobU</fullName>
    </recommendedName>
    <alternativeName>
        <fullName>Adenosylcobinamide kinase</fullName>
        <ecNumber evidence="2">2.7.1.156</ecNumber>
    </alternativeName>
    <alternativeName>
        <fullName>Adenosylcobinamide-phosphate guanylyltransferase</fullName>
        <ecNumber evidence="2">2.7.7.62</ecNumber>
    </alternativeName>
</protein>
<name>COBU_ECOLI</name>
<accession>P0AE76</accession>
<accession>P46886</accession>
<reference key="1">
    <citation type="journal article" date="1995" name="J. Bacteriol.">
        <title>The cobalamin (coenzyme B12) biosynthetic genes of Escherichia coli.</title>
        <authorList>
            <person name="Lawrence J.G."/>
            <person name="Roth J.R."/>
        </authorList>
    </citation>
    <scope>NUCLEOTIDE SEQUENCE [GENOMIC DNA]</scope>
    <source>
        <strain>K12 / W3110 / ATCC 27325 / DSM 5911</strain>
    </source>
</reference>
<reference key="2">
    <citation type="journal article" date="1996" name="DNA Res.">
        <title>A 460-kb DNA sequence of the Escherichia coli K-12 genome corresponding to the 40.1-50.0 min region on the linkage map.</title>
        <authorList>
            <person name="Itoh T."/>
            <person name="Aiba H."/>
            <person name="Baba T."/>
            <person name="Fujita K."/>
            <person name="Hayashi K."/>
            <person name="Inada T."/>
            <person name="Isono K."/>
            <person name="Kasai H."/>
            <person name="Kimura S."/>
            <person name="Kitakawa M."/>
            <person name="Kitagawa M."/>
            <person name="Makino K."/>
            <person name="Miki T."/>
            <person name="Mizobuchi K."/>
            <person name="Mori H."/>
            <person name="Mori T."/>
            <person name="Motomura K."/>
            <person name="Nakade S."/>
            <person name="Nakamura Y."/>
            <person name="Nashimoto H."/>
            <person name="Nishio Y."/>
            <person name="Oshima T."/>
            <person name="Saito N."/>
            <person name="Sampei G."/>
            <person name="Seki Y."/>
            <person name="Sivasundaram S."/>
            <person name="Tagami H."/>
            <person name="Takeda J."/>
            <person name="Takemoto K."/>
            <person name="Wada C."/>
            <person name="Yamamoto Y."/>
            <person name="Horiuchi T."/>
        </authorList>
    </citation>
    <scope>NUCLEOTIDE SEQUENCE [LARGE SCALE GENOMIC DNA]</scope>
    <source>
        <strain>K12 / W3110 / ATCC 27325 / DSM 5911</strain>
    </source>
</reference>
<reference key="3">
    <citation type="journal article" date="1997" name="Science">
        <title>The complete genome sequence of Escherichia coli K-12.</title>
        <authorList>
            <person name="Blattner F.R."/>
            <person name="Plunkett G. III"/>
            <person name="Bloch C.A."/>
            <person name="Perna N.T."/>
            <person name="Burland V."/>
            <person name="Riley M."/>
            <person name="Collado-Vides J."/>
            <person name="Glasner J.D."/>
            <person name="Rode C.K."/>
            <person name="Mayhew G.F."/>
            <person name="Gregor J."/>
            <person name="Davis N.W."/>
            <person name="Kirkpatrick H.A."/>
            <person name="Goeden M.A."/>
            <person name="Rose D.J."/>
            <person name="Mau B."/>
            <person name="Shao Y."/>
        </authorList>
    </citation>
    <scope>NUCLEOTIDE SEQUENCE [LARGE SCALE GENOMIC DNA]</scope>
    <source>
        <strain>K12 / MG1655 / ATCC 47076</strain>
    </source>
</reference>
<reference key="4">
    <citation type="journal article" date="2006" name="Mol. Syst. Biol.">
        <title>Highly accurate genome sequences of Escherichia coli K-12 strains MG1655 and W3110.</title>
        <authorList>
            <person name="Hayashi K."/>
            <person name="Morooka N."/>
            <person name="Yamamoto Y."/>
            <person name="Fujita K."/>
            <person name="Isono K."/>
            <person name="Choi S."/>
            <person name="Ohtsubo E."/>
            <person name="Baba T."/>
            <person name="Wanner B.L."/>
            <person name="Mori H."/>
            <person name="Horiuchi T."/>
        </authorList>
    </citation>
    <scope>NUCLEOTIDE SEQUENCE [LARGE SCALE GENOMIC DNA]</scope>
    <source>
        <strain>K12 / W3110 / ATCC 27325 / DSM 5911</strain>
    </source>
</reference>
<feature type="chain" id="PRO_0000089996" description="Bifunctional adenosylcobalamin biosynthesis protein CobU">
    <location>
        <begin position="1"/>
        <end position="181"/>
    </location>
</feature>
<feature type="active site" description="GMP-histidine intermediate" evidence="1">
    <location>
        <position position="47"/>
    </location>
</feature>
<feature type="binding site" evidence="1">
    <location>
        <begin position="7"/>
        <end position="14"/>
    </location>
    <ligand>
        <name>GTP</name>
        <dbReference type="ChEBI" id="CHEBI:37565"/>
    </ligand>
</feature>
<feature type="binding site" evidence="1">
    <location>
        <begin position="31"/>
        <end position="33"/>
    </location>
    <ligand>
        <name>GTP</name>
        <dbReference type="ChEBI" id="CHEBI:37565"/>
    </ligand>
</feature>
<feature type="binding site" evidence="1">
    <location>
        <begin position="48"/>
        <end position="51"/>
    </location>
    <ligand>
        <name>GTP</name>
        <dbReference type="ChEBI" id="CHEBI:37565"/>
    </ligand>
</feature>
<feature type="binding site" evidence="1">
    <location>
        <position position="59"/>
    </location>
    <ligand>
        <name>GTP</name>
        <dbReference type="ChEBI" id="CHEBI:37565"/>
    </ligand>
</feature>
<feature type="binding site" evidence="1">
    <location>
        <position position="81"/>
    </location>
    <ligand>
        <name>GTP</name>
        <dbReference type="ChEBI" id="CHEBI:37565"/>
    </ligand>
</feature>